<keyword id="KW-0997">Cell inner membrane</keyword>
<keyword id="KW-1003">Cell membrane</keyword>
<keyword id="KW-0408">Iron</keyword>
<keyword id="KW-0472">Membrane</keyword>
<keyword id="KW-0479">Metal-binding</keyword>
<keyword id="KW-0503">Monooxygenase</keyword>
<keyword id="KW-0560">Oxidoreductase</keyword>
<keyword id="KW-1185">Reference proteome</keyword>
<keyword id="KW-0812">Transmembrane</keyword>
<keyword id="KW-1133">Transmembrane helix</keyword>
<proteinExistence type="evidence at transcript level"/>
<sequence length="382" mass="43923">MFENTNPDVMLKMKKYGYLAFWAIMVPLVPFSAFVGVESGTQDYWAWFMYAFIFGIIPVLDYLVGKDPTNPSEDVQVPTMSEEVFYRVSAIAMGFVWIAVLFYAGHIFMNNGYGLLGKIGWIVSIGTVGGIIAINLGHELIHKDPKVENWMGGLLLSSVTYAGFKVEHVRGHHVHVSTPDDASSSRYNQSLYNFLPKAFVHNFINAWSLEKKYLERKGKKNISVHNELIWWYSISALFAATFGLLWGWQGVVFFLGQSFFAALALEIINYIEHYGLHRRVNDKGRFERVTPAHSWNSNFLLTNLALFQLQRHSDHHAYAKRRYQVLRHYEESPQLPAGYATMYVLALIPPLWRKVMNPRVEAYYEGELDQLFRDGKRVNNIA</sequence>
<name>ALKB2_ALCBS</name>
<evidence type="ECO:0000250" key="1">
    <source>
        <dbReference type="UniProtKB" id="P12691"/>
    </source>
</evidence>
<evidence type="ECO:0000255" key="2"/>
<evidence type="ECO:0000269" key="3">
    <source>
    </source>
</evidence>
<evidence type="ECO:0000305" key="4"/>
<evidence type="ECO:0000305" key="5">
    <source>
    </source>
</evidence>
<gene>
    <name type="primary">alkB2</name>
    <name type="ordered locus">ABO_0122</name>
</gene>
<feature type="chain" id="PRO_0000392217" description="Alkane 1-monooxygenase 2">
    <location>
        <begin position="1"/>
        <end position="382"/>
    </location>
</feature>
<feature type="transmembrane region" description="Helical" evidence="2">
    <location>
        <begin position="17"/>
        <end position="37"/>
    </location>
</feature>
<feature type="transmembrane region" description="Helical" evidence="2">
    <location>
        <begin position="45"/>
        <end position="65"/>
    </location>
</feature>
<feature type="transmembrane region" description="Helical" evidence="2">
    <location>
        <begin position="88"/>
        <end position="108"/>
    </location>
</feature>
<feature type="transmembrane region" description="Helical" evidence="2">
    <location>
        <begin position="114"/>
        <end position="134"/>
    </location>
</feature>
<feature type="transmembrane region" description="Helical" evidence="2">
    <location>
        <begin position="236"/>
        <end position="256"/>
    </location>
</feature>
<feature type="binding site" evidence="1">
    <location>
        <position position="138"/>
    </location>
    <ligand>
        <name>Fe cation</name>
        <dbReference type="ChEBI" id="CHEBI:24875"/>
        <label>1</label>
    </ligand>
</feature>
<feature type="binding site" evidence="1">
    <location>
        <position position="142"/>
    </location>
    <ligand>
        <name>Fe cation</name>
        <dbReference type="ChEBI" id="CHEBI:24875"/>
        <label>1</label>
    </ligand>
</feature>
<feature type="binding site" evidence="1">
    <location>
        <position position="168"/>
    </location>
    <ligand>
        <name>Fe cation</name>
        <dbReference type="ChEBI" id="CHEBI:24875"/>
        <label>1</label>
    </ligand>
</feature>
<feature type="binding site" evidence="1">
    <location>
        <position position="172"/>
    </location>
    <ligand>
        <name>Fe cation</name>
        <dbReference type="ChEBI" id="CHEBI:24875"/>
        <label>1</label>
    </ligand>
</feature>
<feature type="binding site" evidence="1">
    <location>
        <position position="173"/>
    </location>
    <ligand>
        <name>Fe cation</name>
        <dbReference type="ChEBI" id="CHEBI:24875"/>
        <label>2</label>
    </ligand>
</feature>
<feature type="binding site" evidence="1">
    <location>
        <position position="312"/>
    </location>
    <ligand>
        <name>Fe cation</name>
        <dbReference type="ChEBI" id="CHEBI:24875"/>
        <label>2</label>
    </ligand>
</feature>
<feature type="binding site" evidence="1">
    <location>
        <position position="315"/>
    </location>
    <ligand>
        <name>Fe cation</name>
        <dbReference type="ChEBI" id="CHEBI:24875"/>
        <label>2</label>
    </ligand>
</feature>
<feature type="binding site" evidence="1">
    <location>
        <position position="316"/>
    </location>
    <ligand>
        <name>Fe cation</name>
        <dbReference type="ChEBI" id="CHEBI:24875"/>
        <label>2</label>
    </ligand>
</feature>
<accession>Q0VTH3</accession>
<accession>Q7WY79</accession>
<comment type="function">
    <text evidence="3">Catalyzes the hydroxylation of n-alkanes in the presence of a NADH-rubredoxin reductase and rubredoxin. It preferably hydroxylases C8-C16 hydrocarbons.</text>
</comment>
<comment type="catalytic activity">
    <reaction evidence="5">
        <text>octane + 2 reduced [rubredoxin] + O2 + 2 H(+) = 2 oxidized [rubredoxin] + octan-1-ol + H2O</text>
        <dbReference type="Rhea" id="RHEA:19341"/>
        <dbReference type="Rhea" id="RHEA-COMP:10302"/>
        <dbReference type="Rhea" id="RHEA-COMP:10303"/>
        <dbReference type="ChEBI" id="CHEBI:15377"/>
        <dbReference type="ChEBI" id="CHEBI:15378"/>
        <dbReference type="ChEBI" id="CHEBI:15379"/>
        <dbReference type="ChEBI" id="CHEBI:16188"/>
        <dbReference type="ChEBI" id="CHEBI:17590"/>
        <dbReference type="ChEBI" id="CHEBI:29033"/>
        <dbReference type="ChEBI" id="CHEBI:29034"/>
        <dbReference type="EC" id="1.14.15.3"/>
    </reaction>
</comment>
<comment type="cofactor">
    <cofactor evidence="1">
        <name>Fe(3+)</name>
        <dbReference type="ChEBI" id="CHEBI:29034"/>
    </cofactor>
    <text evidence="1">Binds 2 Fe(3+) ions per subunit.</text>
</comment>
<comment type="pathway">
    <text>Hydrocarbon metabolism; alkane degradation.</text>
</comment>
<comment type="subcellular location">
    <subcellularLocation>
        <location evidence="4">Cell inner membrane</location>
        <topology evidence="4">Multi-pass membrane protein</topology>
    </subcellularLocation>
</comment>
<comment type="induction">
    <text evidence="3">Induced by n-alkanes.</text>
</comment>
<comment type="similarity">
    <text evidence="4">Belongs to the fatty acid desaturase type 1 family. AlkB subfamily.</text>
</comment>
<organism>
    <name type="scientific">Alcanivorax borkumensis (strain ATCC 700651 / DSM 11573 / NCIMB 13689 / SK2)</name>
    <dbReference type="NCBI Taxonomy" id="393595"/>
    <lineage>
        <taxon>Bacteria</taxon>
        <taxon>Pseudomonadati</taxon>
        <taxon>Pseudomonadota</taxon>
        <taxon>Gammaproteobacteria</taxon>
        <taxon>Oceanospirillales</taxon>
        <taxon>Alcanivoracaceae</taxon>
        <taxon>Alcanivorax</taxon>
    </lineage>
</organism>
<dbReference type="EC" id="1.14.15.3"/>
<dbReference type="EMBL" id="AB110226">
    <property type="protein sequence ID" value="BAC98366.1"/>
    <property type="molecule type" value="Genomic_DNA"/>
</dbReference>
<dbReference type="EMBL" id="AJ577851">
    <property type="protein sequence ID" value="CAE17295.1"/>
    <property type="molecule type" value="Genomic_DNA"/>
</dbReference>
<dbReference type="EMBL" id="AM286690">
    <property type="protein sequence ID" value="CAL15570.1"/>
    <property type="molecule type" value="Genomic_DNA"/>
</dbReference>
<dbReference type="RefSeq" id="WP_011587420.1">
    <property type="nucleotide sequence ID" value="NC_008260.1"/>
</dbReference>
<dbReference type="SMR" id="Q0VTH3"/>
<dbReference type="STRING" id="393595.ABO_0122"/>
<dbReference type="KEGG" id="abo:ABO_0122"/>
<dbReference type="eggNOG" id="COG3239">
    <property type="taxonomic scope" value="Bacteria"/>
</dbReference>
<dbReference type="HOGENOM" id="CLU_044462_1_0_6"/>
<dbReference type="OrthoDB" id="4759734at2"/>
<dbReference type="UniPathway" id="UPA00191"/>
<dbReference type="Proteomes" id="UP000008871">
    <property type="component" value="Chromosome"/>
</dbReference>
<dbReference type="GO" id="GO:0005886">
    <property type="term" value="C:plasma membrane"/>
    <property type="evidence" value="ECO:0007669"/>
    <property type="project" value="UniProtKB-SubCell"/>
</dbReference>
<dbReference type="GO" id="GO:0018685">
    <property type="term" value="F:alkane 1-monooxygenase activity"/>
    <property type="evidence" value="ECO:0000314"/>
    <property type="project" value="UniProtKB"/>
</dbReference>
<dbReference type="GO" id="GO:0046872">
    <property type="term" value="F:metal ion binding"/>
    <property type="evidence" value="ECO:0007669"/>
    <property type="project" value="UniProtKB-KW"/>
</dbReference>
<dbReference type="GO" id="GO:0043448">
    <property type="term" value="P:alkane catabolic process"/>
    <property type="evidence" value="ECO:0000314"/>
    <property type="project" value="UniProtKB"/>
</dbReference>
<dbReference type="GO" id="GO:0006629">
    <property type="term" value="P:lipid metabolic process"/>
    <property type="evidence" value="ECO:0007669"/>
    <property type="project" value="InterPro"/>
</dbReference>
<dbReference type="CDD" id="cd03512">
    <property type="entry name" value="Alkane-hydroxylase"/>
    <property type="match status" value="1"/>
</dbReference>
<dbReference type="InterPro" id="IPR033885">
    <property type="entry name" value="AlkB/XylM"/>
</dbReference>
<dbReference type="InterPro" id="IPR005804">
    <property type="entry name" value="FA_desaturase_dom"/>
</dbReference>
<dbReference type="PANTHER" id="PTHR38674">
    <property type="entry name" value="ALKANE 1-MONOOXYGENASE 1"/>
    <property type="match status" value="1"/>
</dbReference>
<dbReference type="PANTHER" id="PTHR38674:SF1">
    <property type="entry name" value="ALKANE 1-MONOOXYGENASE 1"/>
    <property type="match status" value="1"/>
</dbReference>
<dbReference type="Pfam" id="PF00487">
    <property type="entry name" value="FA_desaturase"/>
    <property type="match status" value="1"/>
</dbReference>
<protein>
    <recommendedName>
        <fullName>Alkane 1-monooxygenase 2</fullName>
        <ecNumber>1.14.15.3</ecNumber>
    </recommendedName>
    <alternativeName>
        <fullName>Alkane hydroxylase</fullName>
        <shortName>AHs</shortName>
    </alternativeName>
    <alternativeName>
        <fullName>Terminal alkane hydroxylase</fullName>
    </alternativeName>
</protein>
<reference key="1">
    <citation type="journal article" date="2004" name="Environ. Microbiol.">
        <title>Cloning and functional analysis of alkB genes in Alcanivorax borkumensis SK2.</title>
        <authorList>
            <person name="Hara A."/>
            <person name="Baik S.H."/>
            <person name="Syutsubo K."/>
            <person name="Misawa N."/>
            <person name="Smits T.H."/>
            <person name="van Beilen J.B."/>
            <person name="Harayama S."/>
        </authorList>
    </citation>
    <scope>NUCLEOTIDE SEQUENCE [GENOMIC DNA]</scope>
</reference>
<reference key="2">
    <citation type="journal article" date="2004" name="Environ. Microbiol.">
        <title>Characterization of two alkane hydroxylase genes from the marine hydrocarbonoclastic bacterium Alcanivorax borkumensis.</title>
        <authorList>
            <person name="van Beilen J.B."/>
            <person name="Marin M.M."/>
            <person name="Smits T.H."/>
            <person name="Rothlisberger M."/>
            <person name="Franchini A.G."/>
            <person name="Witholt B."/>
            <person name="Rojo F."/>
        </authorList>
    </citation>
    <scope>NUCLEOTIDE SEQUENCE [GENOMIC DNA]</scope>
    <scope>SUBSTRATE SPECIFICITY</scope>
    <source>
        <strain>AP1</strain>
    </source>
</reference>
<reference key="3">
    <citation type="journal article" date="2006" name="Nat. Biotechnol.">
        <title>Genome sequence of the ubiquitous hydrocarbon-degrading marine bacterium Alcanivorax borkumensis.</title>
        <authorList>
            <person name="Schneiker S."/>
            <person name="Martins dos Santos V.A.P."/>
            <person name="Bartels D."/>
            <person name="Bekel T."/>
            <person name="Brecht M."/>
            <person name="Buhrmester J."/>
            <person name="Chernikova T.N."/>
            <person name="Denaro R."/>
            <person name="Ferrer M."/>
            <person name="Gertler C."/>
            <person name="Goesmann A."/>
            <person name="Golyshina O.V."/>
            <person name="Kaminski F."/>
            <person name="Khachane A.N."/>
            <person name="Lang S."/>
            <person name="Linke B."/>
            <person name="McHardy A.C."/>
            <person name="Meyer F."/>
            <person name="Nechitaylo T."/>
            <person name="Puehler A."/>
            <person name="Regenhardt D."/>
            <person name="Rupp O."/>
            <person name="Sabirova J.S."/>
            <person name="Selbitschka W."/>
            <person name="Yakimov M.M."/>
            <person name="Timmis K.N."/>
            <person name="Vorhoelter F.-J."/>
            <person name="Weidner S."/>
            <person name="Kaiser O."/>
            <person name="Golyshin P.N."/>
        </authorList>
    </citation>
    <scope>NUCLEOTIDE SEQUENCE [LARGE SCALE GENOMIC DNA]</scope>
    <source>
        <strain>ATCC 700651 / DSM 11573 / NCIMB 13689 / SK2</strain>
    </source>
</reference>
<reference key="4">
    <citation type="journal article" date="2010" name="Biotechnol. Lett.">
        <title>Production of a recombinant alkane hydroxylase (AlkB2) from Alcanivorax borkumensis.</title>
        <authorList>
            <person name="Miri M."/>
            <person name="Bambai B."/>
            <person name="Tabandeh F."/>
            <person name="Sadeghizadeh M."/>
            <person name="Kamali N."/>
        </authorList>
    </citation>
    <scope>FUNCTION</scope>
    <scope>INDUCTION</scope>
</reference>